<organism>
    <name type="scientific">Burkholderia vietnamiensis (strain G4 / LMG 22486)</name>
    <name type="common">Burkholderia cepacia (strain R1808)</name>
    <dbReference type="NCBI Taxonomy" id="269482"/>
    <lineage>
        <taxon>Bacteria</taxon>
        <taxon>Pseudomonadati</taxon>
        <taxon>Pseudomonadota</taxon>
        <taxon>Betaproteobacteria</taxon>
        <taxon>Burkholderiales</taxon>
        <taxon>Burkholderiaceae</taxon>
        <taxon>Burkholderia</taxon>
        <taxon>Burkholderia cepacia complex</taxon>
    </lineage>
</organism>
<reference key="1">
    <citation type="submission" date="2007-03" db="EMBL/GenBank/DDBJ databases">
        <title>Complete sequence of chromosome 1 of Burkholderia vietnamiensis G4.</title>
        <authorList>
            <consortium name="US DOE Joint Genome Institute"/>
            <person name="Copeland A."/>
            <person name="Lucas S."/>
            <person name="Lapidus A."/>
            <person name="Barry K."/>
            <person name="Detter J.C."/>
            <person name="Glavina del Rio T."/>
            <person name="Hammon N."/>
            <person name="Israni S."/>
            <person name="Dalin E."/>
            <person name="Tice H."/>
            <person name="Pitluck S."/>
            <person name="Chain P."/>
            <person name="Malfatti S."/>
            <person name="Shin M."/>
            <person name="Vergez L."/>
            <person name="Schmutz J."/>
            <person name="Larimer F."/>
            <person name="Land M."/>
            <person name="Hauser L."/>
            <person name="Kyrpides N."/>
            <person name="Tiedje J."/>
            <person name="Richardson P."/>
        </authorList>
    </citation>
    <scope>NUCLEOTIDE SEQUENCE [LARGE SCALE GENOMIC DNA]</scope>
    <source>
        <strain>G4 / LMG 22486</strain>
    </source>
</reference>
<evidence type="ECO:0000255" key="1">
    <source>
        <dbReference type="HAMAP-Rule" id="MF_01366"/>
    </source>
</evidence>
<evidence type="ECO:0000305" key="2"/>
<sequence length="142" mass="15985">MKTFSAKAHEVTREWYVIDATDKVLGRVASEVARRLRGKHKPEFTPHVDTGDFIIIINASKLKVTGNKTLDKKYYRHSGYPGGIYETTFGKMQERFPGRALEKAVKGMLPKGPLGYAMIKKLKVYAEATHPHSAQQPKALEI</sequence>
<protein>
    <recommendedName>
        <fullName evidence="1">Large ribosomal subunit protein uL13</fullName>
    </recommendedName>
    <alternativeName>
        <fullName evidence="2">50S ribosomal protein L13</fullName>
    </alternativeName>
</protein>
<name>RL13_BURVG</name>
<proteinExistence type="inferred from homology"/>
<keyword id="KW-0687">Ribonucleoprotein</keyword>
<keyword id="KW-0689">Ribosomal protein</keyword>
<dbReference type="EMBL" id="CP000614">
    <property type="protein sequence ID" value="ABO53657.1"/>
    <property type="molecule type" value="Genomic_DNA"/>
</dbReference>
<dbReference type="SMR" id="A4JBK4"/>
<dbReference type="KEGG" id="bvi:Bcep1808_0645"/>
<dbReference type="eggNOG" id="COG0102">
    <property type="taxonomic scope" value="Bacteria"/>
</dbReference>
<dbReference type="HOGENOM" id="CLU_082184_2_2_4"/>
<dbReference type="Proteomes" id="UP000002287">
    <property type="component" value="Chromosome 1"/>
</dbReference>
<dbReference type="GO" id="GO:0022625">
    <property type="term" value="C:cytosolic large ribosomal subunit"/>
    <property type="evidence" value="ECO:0007669"/>
    <property type="project" value="TreeGrafter"/>
</dbReference>
<dbReference type="GO" id="GO:0003729">
    <property type="term" value="F:mRNA binding"/>
    <property type="evidence" value="ECO:0007669"/>
    <property type="project" value="TreeGrafter"/>
</dbReference>
<dbReference type="GO" id="GO:0003735">
    <property type="term" value="F:structural constituent of ribosome"/>
    <property type="evidence" value="ECO:0007669"/>
    <property type="project" value="InterPro"/>
</dbReference>
<dbReference type="GO" id="GO:0017148">
    <property type="term" value="P:negative regulation of translation"/>
    <property type="evidence" value="ECO:0007669"/>
    <property type="project" value="TreeGrafter"/>
</dbReference>
<dbReference type="GO" id="GO:0006412">
    <property type="term" value="P:translation"/>
    <property type="evidence" value="ECO:0007669"/>
    <property type="project" value="UniProtKB-UniRule"/>
</dbReference>
<dbReference type="CDD" id="cd00392">
    <property type="entry name" value="Ribosomal_L13"/>
    <property type="match status" value="1"/>
</dbReference>
<dbReference type="FunFam" id="3.90.1180.10:FF:000001">
    <property type="entry name" value="50S ribosomal protein L13"/>
    <property type="match status" value="1"/>
</dbReference>
<dbReference type="Gene3D" id="3.90.1180.10">
    <property type="entry name" value="Ribosomal protein L13"/>
    <property type="match status" value="1"/>
</dbReference>
<dbReference type="HAMAP" id="MF_01366">
    <property type="entry name" value="Ribosomal_uL13"/>
    <property type="match status" value="1"/>
</dbReference>
<dbReference type="InterPro" id="IPR005822">
    <property type="entry name" value="Ribosomal_uL13"/>
</dbReference>
<dbReference type="InterPro" id="IPR005823">
    <property type="entry name" value="Ribosomal_uL13_bac-type"/>
</dbReference>
<dbReference type="InterPro" id="IPR036899">
    <property type="entry name" value="Ribosomal_uL13_sf"/>
</dbReference>
<dbReference type="NCBIfam" id="TIGR01066">
    <property type="entry name" value="rplM_bact"/>
    <property type="match status" value="1"/>
</dbReference>
<dbReference type="PANTHER" id="PTHR11545:SF2">
    <property type="entry name" value="LARGE RIBOSOMAL SUBUNIT PROTEIN UL13M"/>
    <property type="match status" value="1"/>
</dbReference>
<dbReference type="PANTHER" id="PTHR11545">
    <property type="entry name" value="RIBOSOMAL PROTEIN L13"/>
    <property type="match status" value="1"/>
</dbReference>
<dbReference type="Pfam" id="PF00572">
    <property type="entry name" value="Ribosomal_L13"/>
    <property type="match status" value="1"/>
</dbReference>
<dbReference type="PIRSF" id="PIRSF002181">
    <property type="entry name" value="Ribosomal_L13"/>
    <property type="match status" value="1"/>
</dbReference>
<dbReference type="SUPFAM" id="SSF52161">
    <property type="entry name" value="Ribosomal protein L13"/>
    <property type="match status" value="1"/>
</dbReference>
<accession>A4JBK4</accession>
<feature type="chain" id="PRO_1000055360" description="Large ribosomal subunit protein uL13">
    <location>
        <begin position="1"/>
        <end position="142"/>
    </location>
</feature>
<gene>
    <name evidence="1" type="primary">rplM</name>
    <name type="ordered locus">Bcep1808_0645</name>
</gene>
<comment type="function">
    <text evidence="1">This protein is one of the early assembly proteins of the 50S ribosomal subunit, although it is not seen to bind rRNA by itself. It is important during the early stages of 50S assembly.</text>
</comment>
<comment type="subunit">
    <text evidence="1">Part of the 50S ribosomal subunit.</text>
</comment>
<comment type="similarity">
    <text evidence="1">Belongs to the universal ribosomal protein uL13 family.</text>
</comment>